<gene>
    <name evidence="1" type="primary">coaD</name>
    <name type="ordered locus">TRQ2_0186</name>
</gene>
<dbReference type="EC" id="2.7.7.3" evidence="1"/>
<dbReference type="EMBL" id="CP000969">
    <property type="protein sequence ID" value="ACB08546.1"/>
    <property type="molecule type" value="Genomic_DNA"/>
</dbReference>
<dbReference type="RefSeq" id="WP_004080981.1">
    <property type="nucleotide sequence ID" value="NC_010483.1"/>
</dbReference>
<dbReference type="SMR" id="B1L7W5"/>
<dbReference type="KEGG" id="trq:TRQ2_0186"/>
<dbReference type="HOGENOM" id="CLU_100149_0_1_0"/>
<dbReference type="UniPathway" id="UPA00241">
    <property type="reaction ID" value="UER00355"/>
</dbReference>
<dbReference type="Proteomes" id="UP000001687">
    <property type="component" value="Chromosome"/>
</dbReference>
<dbReference type="GO" id="GO:0005737">
    <property type="term" value="C:cytoplasm"/>
    <property type="evidence" value="ECO:0007669"/>
    <property type="project" value="UniProtKB-SubCell"/>
</dbReference>
<dbReference type="GO" id="GO:0005524">
    <property type="term" value="F:ATP binding"/>
    <property type="evidence" value="ECO:0007669"/>
    <property type="project" value="UniProtKB-KW"/>
</dbReference>
<dbReference type="GO" id="GO:0004595">
    <property type="term" value="F:pantetheine-phosphate adenylyltransferase activity"/>
    <property type="evidence" value="ECO:0007669"/>
    <property type="project" value="UniProtKB-UniRule"/>
</dbReference>
<dbReference type="GO" id="GO:0015937">
    <property type="term" value="P:coenzyme A biosynthetic process"/>
    <property type="evidence" value="ECO:0007669"/>
    <property type="project" value="UniProtKB-UniRule"/>
</dbReference>
<dbReference type="CDD" id="cd02163">
    <property type="entry name" value="PPAT"/>
    <property type="match status" value="1"/>
</dbReference>
<dbReference type="Gene3D" id="3.40.50.620">
    <property type="entry name" value="HUPs"/>
    <property type="match status" value="1"/>
</dbReference>
<dbReference type="HAMAP" id="MF_00151">
    <property type="entry name" value="PPAT_bact"/>
    <property type="match status" value="1"/>
</dbReference>
<dbReference type="InterPro" id="IPR004821">
    <property type="entry name" value="Cyt_trans-like"/>
</dbReference>
<dbReference type="InterPro" id="IPR001980">
    <property type="entry name" value="PPAT"/>
</dbReference>
<dbReference type="InterPro" id="IPR014729">
    <property type="entry name" value="Rossmann-like_a/b/a_fold"/>
</dbReference>
<dbReference type="NCBIfam" id="TIGR01510">
    <property type="entry name" value="coaD_prev_kdtB"/>
    <property type="match status" value="1"/>
</dbReference>
<dbReference type="NCBIfam" id="TIGR00125">
    <property type="entry name" value="cyt_tran_rel"/>
    <property type="match status" value="1"/>
</dbReference>
<dbReference type="PANTHER" id="PTHR21342">
    <property type="entry name" value="PHOSPHOPANTETHEINE ADENYLYLTRANSFERASE"/>
    <property type="match status" value="1"/>
</dbReference>
<dbReference type="PANTHER" id="PTHR21342:SF1">
    <property type="entry name" value="PHOSPHOPANTETHEINE ADENYLYLTRANSFERASE"/>
    <property type="match status" value="1"/>
</dbReference>
<dbReference type="Pfam" id="PF01467">
    <property type="entry name" value="CTP_transf_like"/>
    <property type="match status" value="1"/>
</dbReference>
<dbReference type="PRINTS" id="PR01020">
    <property type="entry name" value="LPSBIOSNTHSS"/>
</dbReference>
<dbReference type="SUPFAM" id="SSF52374">
    <property type="entry name" value="Nucleotidylyl transferase"/>
    <property type="match status" value="1"/>
</dbReference>
<keyword id="KW-0067">ATP-binding</keyword>
<keyword id="KW-0173">Coenzyme A biosynthesis</keyword>
<keyword id="KW-0963">Cytoplasm</keyword>
<keyword id="KW-0460">Magnesium</keyword>
<keyword id="KW-0547">Nucleotide-binding</keyword>
<keyword id="KW-0548">Nucleotidyltransferase</keyword>
<keyword id="KW-0808">Transferase</keyword>
<organism>
    <name type="scientific">Thermotoga sp. (strain RQ2)</name>
    <dbReference type="NCBI Taxonomy" id="126740"/>
    <lineage>
        <taxon>Bacteria</taxon>
        <taxon>Thermotogati</taxon>
        <taxon>Thermotogota</taxon>
        <taxon>Thermotogae</taxon>
        <taxon>Thermotogales</taxon>
        <taxon>Thermotogaceae</taxon>
        <taxon>Thermotoga</taxon>
    </lineage>
</organism>
<feature type="chain" id="PRO_1000096854" description="Phosphopantetheine adenylyltransferase">
    <location>
        <begin position="1"/>
        <end position="161"/>
    </location>
</feature>
<feature type="binding site" evidence="1">
    <location>
        <begin position="8"/>
        <end position="9"/>
    </location>
    <ligand>
        <name>ATP</name>
        <dbReference type="ChEBI" id="CHEBI:30616"/>
    </ligand>
</feature>
<feature type="binding site" evidence="1">
    <location>
        <position position="8"/>
    </location>
    <ligand>
        <name>substrate</name>
    </ligand>
</feature>
<feature type="binding site" evidence="1">
    <location>
        <position position="16"/>
    </location>
    <ligand>
        <name>ATP</name>
        <dbReference type="ChEBI" id="CHEBI:30616"/>
    </ligand>
</feature>
<feature type="binding site" evidence="1">
    <location>
        <position position="40"/>
    </location>
    <ligand>
        <name>substrate</name>
    </ligand>
</feature>
<feature type="binding site" evidence="1">
    <location>
        <position position="72"/>
    </location>
    <ligand>
        <name>substrate</name>
    </ligand>
</feature>
<feature type="binding site" evidence="1">
    <location>
        <position position="86"/>
    </location>
    <ligand>
        <name>substrate</name>
    </ligand>
</feature>
<feature type="binding site" evidence="1">
    <location>
        <begin position="87"/>
        <end position="89"/>
    </location>
    <ligand>
        <name>ATP</name>
        <dbReference type="ChEBI" id="CHEBI:30616"/>
    </ligand>
</feature>
<feature type="binding site" evidence="1">
    <location>
        <position position="97"/>
    </location>
    <ligand>
        <name>ATP</name>
        <dbReference type="ChEBI" id="CHEBI:30616"/>
    </ligand>
</feature>
<feature type="binding site" evidence="1">
    <location>
        <begin position="122"/>
        <end position="128"/>
    </location>
    <ligand>
        <name>ATP</name>
        <dbReference type="ChEBI" id="CHEBI:30616"/>
    </ligand>
</feature>
<feature type="site" description="Transition state stabilizer" evidence="1">
    <location>
        <position position="16"/>
    </location>
</feature>
<comment type="function">
    <text evidence="1">Reversibly transfers an adenylyl group from ATP to 4'-phosphopantetheine, yielding dephospho-CoA (dPCoA) and pyrophosphate.</text>
</comment>
<comment type="catalytic activity">
    <reaction evidence="1">
        <text>(R)-4'-phosphopantetheine + ATP + H(+) = 3'-dephospho-CoA + diphosphate</text>
        <dbReference type="Rhea" id="RHEA:19801"/>
        <dbReference type="ChEBI" id="CHEBI:15378"/>
        <dbReference type="ChEBI" id="CHEBI:30616"/>
        <dbReference type="ChEBI" id="CHEBI:33019"/>
        <dbReference type="ChEBI" id="CHEBI:57328"/>
        <dbReference type="ChEBI" id="CHEBI:61723"/>
        <dbReference type="EC" id="2.7.7.3"/>
    </reaction>
</comment>
<comment type="cofactor">
    <cofactor evidence="1">
        <name>Mg(2+)</name>
        <dbReference type="ChEBI" id="CHEBI:18420"/>
    </cofactor>
</comment>
<comment type="pathway">
    <text evidence="1">Cofactor biosynthesis; coenzyme A biosynthesis; CoA from (R)-pantothenate: step 4/5.</text>
</comment>
<comment type="subunit">
    <text evidence="1">Homohexamer.</text>
</comment>
<comment type="subcellular location">
    <subcellularLocation>
        <location evidence="1">Cytoplasm</location>
    </subcellularLocation>
</comment>
<comment type="similarity">
    <text evidence="1">Belongs to the bacterial CoaD family.</text>
</comment>
<evidence type="ECO:0000255" key="1">
    <source>
        <dbReference type="HAMAP-Rule" id="MF_00151"/>
    </source>
</evidence>
<sequence length="161" mass="18249">MKAVYPGSFDPITLGHVDIIKRALSIFDELVVLVTENPRKKCMFTLEERKKLIEEVLSDLDGVKVDVHHGLLVDYLKKHGIKVLVRGLRAVTDYEYELQMALANKKLYSDLETVFLIASEKFSFISSSLVKEVALYGGDVTEWVPPEVARALNEKLKEGKR</sequence>
<protein>
    <recommendedName>
        <fullName evidence="1">Phosphopantetheine adenylyltransferase</fullName>
        <ecNumber evidence="1">2.7.7.3</ecNumber>
    </recommendedName>
    <alternativeName>
        <fullName evidence="1">Dephospho-CoA pyrophosphorylase</fullName>
    </alternativeName>
    <alternativeName>
        <fullName evidence="1">Pantetheine-phosphate adenylyltransferase</fullName>
        <shortName evidence="1">PPAT</shortName>
    </alternativeName>
</protein>
<proteinExistence type="inferred from homology"/>
<reference key="1">
    <citation type="journal article" date="2011" name="J. Bacteriol.">
        <title>Genome sequence of Thermotoga sp. strain RQ2, a hyperthermophilic bacterium isolated from a geothermally heated region of the seafloor near Ribeira Quente, the Azores.</title>
        <authorList>
            <person name="Swithers K.S."/>
            <person name="DiPippo J.L."/>
            <person name="Bruce D.C."/>
            <person name="Detter C."/>
            <person name="Tapia R."/>
            <person name="Han S."/>
            <person name="Saunders E."/>
            <person name="Goodwin L.A."/>
            <person name="Han J."/>
            <person name="Woyke T."/>
            <person name="Pitluck S."/>
            <person name="Pennacchio L."/>
            <person name="Nolan M."/>
            <person name="Mikhailova N."/>
            <person name="Lykidis A."/>
            <person name="Land M.L."/>
            <person name="Brettin T."/>
            <person name="Stetter K.O."/>
            <person name="Nelson K.E."/>
            <person name="Gogarten J.P."/>
            <person name="Noll K.M."/>
        </authorList>
    </citation>
    <scope>NUCLEOTIDE SEQUENCE [LARGE SCALE GENOMIC DNA]</scope>
    <source>
        <strain>RQ2</strain>
    </source>
</reference>
<accession>B1L7W5</accession>
<name>COAD_THESQ</name>